<comment type="function">
    <text evidence="1">Multifunctional regulator of the expression of viral genes that mediates nuclear export of viral intronless mRNAs. This immediate early (EI) protein promotes the nuclear export of viral intronless mRNAs by interacting with mRNAs and host NXF1/TAP (By similarity).</text>
</comment>
<comment type="subunit">
    <text evidence="1">Homodimer. Homodimerization is required for transactivation. Associates in a complex with RNA, and host export factors NXF1/TAP and ALYREF; these interactions allow nuclear export of viral transcripts. Interacts with three host shuttling SR proteins SRSF1, SRSF3 and SRSF7. Interacts with host SRPK1. Interacts with IE62; this interaction enhances IE62 transactivation (By similarity).</text>
</comment>
<comment type="interaction">
    <interactant intactId="EBI-11702805">
        <id>Q05906</id>
    </interactant>
    <interactant intactId="EBI-355371">
        <id>P20226</id>
        <label>TBP</label>
    </interactant>
    <organismsDiffer>true</organismsDiffer>
    <experiments>4</experiments>
</comment>
<comment type="subcellular location">
    <subcellularLocation>
        <location evidence="1">Host cytoplasm</location>
    </subcellularLocation>
    <subcellularLocation>
        <location evidence="1">Host nucleus</location>
    </subcellularLocation>
    <text evidence="1">Shuttles between the nucleus and the cytoplasm.</text>
</comment>
<comment type="domain">
    <text evidence="1">Binds viral intronless RNAs and SR proteins through the Arg-rich region.</text>
</comment>
<comment type="similarity">
    <text evidence="4">Belongs to the HHV-1 ICP27 protein family.</text>
</comment>
<sequence>MALSSVSSCEPMEDEMSIMGSDTEDNFTGGDTCAEATRGLVNKSAFVPTQTVGTVSALRNVVGNPPKSVVVSFSASPQRAQPSNPKSERPAFGHGRRNRRRPFRRNNWKQQQRGWEKPEPENVPARQSAGSWPKRSSLPVHMRLGQRGGDSSSADSGHGGAGPSDRWRFKTRTQSVARVHRNRRRGNANHGSNTPGRSAGDRLNAAAARSIADVCRRVTSSRIGEMFHGARETLTTPVKNGGFRAENSSPWAPVLGFGSDQFNPEARRITWDTLVEHGVNLYKLFEVRSHAAEAARSLRDAVMRGENLLEALASADETLSWCKMIVTKNLPMRTRDPIISSSVALLDNLRLKLEPFMRCYLSSSGSPTLAELCDHQRLSDVACVPTFMFVMLARIARAVGSGAETVSRDALGPDGRVLADYVPGACLAGTLEAIDAHKRRCKADTCSLVSAYTLVPVYLHGKYFYCNQIF</sequence>
<feature type="chain" id="PRO_0000115827" description="mRNA export factor ICP27 homolog">
    <location>
        <begin position="1"/>
        <end position="470"/>
    </location>
</feature>
<feature type="zinc finger region" description="CHC2-type" evidence="2">
    <location>
        <begin position="359"/>
        <end position="446"/>
    </location>
</feature>
<feature type="region of interest" description="Disordered" evidence="3">
    <location>
        <begin position="1"/>
        <end position="31"/>
    </location>
</feature>
<feature type="region of interest" description="Disordered" evidence="3">
    <location>
        <begin position="73"/>
        <end position="202"/>
    </location>
</feature>
<feature type="compositionally biased region" description="Polar residues" evidence="3">
    <location>
        <begin position="73"/>
        <end position="85"/>
    </location>
</feature>
<feature type="compositionally biased region" description="Basic residues" evidence="3">
    <location>
        <begin position="94"/>
        <end position="107"/>
    </location>
</feature>
<feature type="compositionally biased region" description="Basic residues" evidence="3">
    <location>
        <begin position="178"/>
        <end position="187"/>
    </location>
</feature>
<feature type="binding site" evidence="2">
    <location>
        <position position="359"/>
    </location>
    <ligand>
        <name>Zn(2+)</name>
        <dbReference type="ChEBI" id="CHEBI:29105"/>
    </ligand>
</feature>
<feature type="binding site" evidence="2">
    <location>
        <position position="437"/>
    </location>
    <ligand>
        <name>Zn(2+)</name>
        <dbReference type="ChEBI" id="CHEBI:29105"/>
    </ligand>
</feature>
<feature type="binding site" evidence="2">
    <location>
        <position position="441"/>
    </location>
    <ligand>
        <name>Zn(2+)</name>
        <dbReference type="ChEBI" id="CHEBI:29105"/>
    </ligand>
</feature>
<feature type="binding site" evidence="2">
    <location>
        <position position="446"/>
    </location>
    <ligand>
        <name>Zn(2+)</name>
        <dbReference type="ChEBI" id="CHEBI:29105"/>
    </ligand>
</feature>
<evidence type="ECO:0000250" key="1"/>
<evidence type="ECO:0000250" key="2">
    <source>
        <dbReference type="UniProtKB" id="P10238"/>
    </source>
</evidence>
<evidence type="ECO:0000256" key="3">
    <source>
        <dbReference type="SAM" id="MobiDB-lite"/>
    </source>
</evidence>
<evidence type="ECO:0000305" key="4"/>
<reference key="1">
    <citation type="journal article" date="1992" name="J. Virol.">
        <title>Identification and transcriptional analyses of the UL3 and UL4 genes of equine herpesvirus 1, homologs of the ICP27 and glycoprotein K genes of herpes simplex virus.</title>
        <authorList>
            <person name="Zhao Y."/>
            <person name="Holden V.R."/>
            <person name="Harty R.N."/>
            <person name="O'Callaghan D.J."/>
        </authorList>
    </citation>
    <scope>NUCLEOTIDE SEQUENCE [GENOMIC DNA]</scope>
</reference>
<dbReference type="EMBL" id="M95822">
    <property type="protein sequence ID" value="AAA46099.1"/>
    <property type="molecule type" value="Genomic_DNA"/>
</dbReference>
<dbReference type="PIR" id="B42746">
    <property type="entry name" value="B42746"/>
</dbReference>
<dbReference type="SMR" id="Q05906"/>
<dbReference type="IntAct" id="Q05906">
    <property type="interactions" value="1"/>
</dbReference>
<dbReference type="GO" id="GO:0030430">
    <property type="term" value="C:host cell cytoplasm"/>
    <property type="evidence" value="ECO:0007669"/>
    <property type="project" value="UniProtKB-SubCell"/>
</dbReference>
<dbReference type="GO" id="GO:0042025">
    <property type="term" value="C:host cell nucleus"/>
    <property type="evidence" value="ECO:0000314"/>
    <property type="project" value="AgBase"/>
</dbReference>
<dbReference type="GO" id="GO:0003723">
    <property type="term" value="F:RNA binding"/>
    <property type="evidence" value="ECO:0007669"/>
    <property type="project" value="UniProtKB-KW"/>
</dbReference>
<dbReference type="GO" id="GO:0008270">
    <property type="term" value="F:zinc ion binding"/>
    <property type="evidence" value="ECO:0007669"/>
    <property type="project" value="UniProtKB-KW"/>
</dbReference>
<dbReference type="GO" id="GO:0006355">
    <property type="term" value="P:regulation of DNA-templated transcription"/>
    <property type="evidence" value="ECO:0007669"/>
    <property type="project" value="InterPro"/>
</dbReference>
<dbReference type="InterPro" id="IPR008648">
    <property type="entry name" value="ICP27-like"/>
</dbReference>
<dbReference type="Pfam" id="PF05459">
    <property type="entry name" value="Herpes_UL69"/>
    <property type="match status" value="1"/>
</dbReference>
<organism>
    <name type="scientific">Equine herpesvirus 1 (strain Kentucky A)</name>
    <name type="common">EHV-1</name>
    <name type="synonym">Equine abortion virus</name>
    <dbReference type="NCBI Taxonomy" id="10329"/>
    <lineage>
        <taxon>Viruses</taxon>
        <taxon>Duplodnaviria</taxon>
        <taxon>Heunggongvirae</taxon>
        <taxon>Peploviricota</taxon>
        <taxon>Herviviricetes</taxon>
        <taxon>Herpesvirales</taxon>
        <taxon>Orthoherpesviridae</taxon>
        <taxon>Alphaherpesvirinae</taxon>
        <taxon>Varicellovirus</taxon>
        <taxon>Varicellovirus equidalpha1</taxon>
        <taxon>Equid alphaherpesvirus 1</taxon>
    </lineage>
</organism>
<protein>
    <recommendedName>
        <fullName>mRNA export factor ICP27 homolog</fullName>
    </recommendedName>
    <alternativeName>
        <fullName>Transcriptional regulator IE63 homolog</fullName>
    </alternativeName>
</protein>
<accession>Q05906</accession>
<name>ICP27_EHV1K</name>
<keyword id="KW-0010">Activator</keyword>
<keyword id="KW-0244">Early protein</keyword>
<keyword id="KW-1035">Host cytoplasm</keyword>
<keyword id="KW-1048">Host nucleus</keyword>
<keyword id="KW-0945">Host-virus interaction</keyword>
<keyword id="KW-0479">Metal-binding</keyword>
<keyword id="KW-0694">RNA-binding</keyword>
<keyword id="KW-0804">Transcription</keyword>
<keyword id="KW-0805">Transcription regulation</keyword>
<keyword id="KW-0862">Zinc</keyword>
<keyword id="KW-0863">Zinc-finger</keyword>
<proteinExistence type="evidence at protein level"/>
<gene>
    <name type="ORF">UL3</name>
</gene>
<organismHost>
    <name type="scientific">Equus caballus</name>
    <name type="common">Horse</name>
    <dbReference type="NCBI Taxonomy" id="9796"/>
</organismHost>